<comment type="function">
    <text evidence="1 8 9 10">Electrogenic antiporter that exchanges sulfate or oxalate for chloride ion in a strictly coupled manner with a 1:1 stoichiometry (PubMed:17442754, PubMed:22399806). Adopts a dynamic conformation, which alternates between the exposure of the central binding site to the extra- and intracellular solutions leading to an inward-to-outward conformational transition during the transport cycle (By similarity). Generates voltage-dependent charge movements resembling to the non-linear capacitance (NLC) of the cell membrane, but which are not associated to electromotile activity (PubMed:17272340, PubMed:22399806).</text>
</comment>
<comment type="catalytic activity">
    <reaction evidence="9">
        <text>oxalate(in) + chloride(out) = oxalate(out) + chloride(in)</text>
        <dbReference type="Rhea" id="RHEA:72263"/>
        <dbReference type="ChEBI" id="CHEBI:17996"/>
        <dbReference type="ChEBI" id="CHEBI:30623"/>
    </reaction>
</comment>
<comment type="catalytic activity">
    <reaction evidence="9">
        <text>sulfate(out) + chloride(in) = sulfate(in) + chloride(out)</text>
        <dbReference type="Rhea" id="RHEA:75295"/>
        <dbReference type="ChEBI" id="CHEBI:16189"/>
        <dbReference type="ChEBI" id="CHEBI:17996"/>
    </reaction>
</comment>
<comment type="activity regulation">
    <text evidence="1">Sulfate/chloride antiport activity is inhibited by salicylate; this inhibition is reversible.</text>
</comment>
<comment type="subunit">
    <text evidence="1 3">Homodimer (By similarity). Interacts (via STAS domain) with CALM; this interaction is calcium-dependent (By similarity).</text>
</comment>
<comment type="subcellular location">
    <subcellularLocation>
        <location evidence="8 9">Cell membrane</location>
        <topology evidence="5">Multi-pass membrane protein</topology>
    </subcellularLocation>
</comment>
<comment type="tissue specificity">
    <text evidence="8">Expressed in hair cells of the auditory organs.</text>
</comment>
<comment type="domain">
    <text evidence="1 2 3">The anion-binding site in STAS domain is lacking (By similarity). The STAS domain mediates dimerization, with both STAS domains latched onto each other in a domain-swapped manner. The N-terminus domain is involved in dimerization such that each N-terminus domain embraces both STAS domains (By similarity). The transmembrane domain consists of 14 transmembrane segments organized in a 7(+)7 inverted repeat architecture that can be divided into two main helix bundles, the ''core'' domain and the ''gate'' domain (By similarity). The transmembrane regions are domain-swapped with the STAS domain containing N- and C-terminal cytoplasmic domains (By similarity).</text>
</comment>
<comment type="miscellaneous">
    <text evidence="1">The anion-binding site that controls electromotility and associated charge movement in mammalian, corresponds to the central binding site of the anion transport pathway in non-mammalian.</text>
</comment>
<comment type="similarity">
    <text evidence="12">Belongs to the SLC26A/SulP transporter (TC 2.A.53) family.</text>
</comment>
<keyword id="KW-1003">Cell membrane</keyword>
<keyword id="KW-0325">Glycoprotein</keyword>
<keyword id="KW-0472">Membrane</keyword>
<keyword id="KW-1185">Reference proteome</keyword>
<keyword id="KW-0812">Transmembrane</keyword>
<keyword id="KW-1133">Transmembrane helix</keyword>
<dbReference type="EMBL" id="BX571796">
    <property type="status" value="NOT_ANNOTATED_CDS"/>
    <property type="molecule type" value="Genomic_DNA"/>
</dbReference>
<dbReference type="EMBL" id="BC054604">
    <property type="protein sequence ID" value="AAH54604.1"/>
    <property type="molecule type" value="mRNA"/>
</dbReference>
<dbReference type="RefSeq" id="NP_958881.1">
    <property type="nucleotide sequence ID" value="NM_201473.1"/>
</dbReference>
<dbReference type="SMR" id="Q7T2C4"/>
<dbReference type="FunCoup" id="Q7T2C4">
    <property type="interactions" value="234"/>
</dbReference>
<dbReference type="STRING" id="7955.ENSDARP00000036010"/>
<dbReference type="PaxDb" id="7955-ENSDARP00000036010"/>
<dbReference type="Ensembl" id="ENSDART00000038642">
    <property type="protein sequence ID" value="ENSDARP00000036010"/>
    <property type="gene ID" value="ENSDARG00000022424"/>
</dbReference>
<dbReference type="GeneID" id="322846"/>
<dbReference type="KEGG" id="dre:322846"/>
<dbReference type="AGR" id="ZFIN:ZDB-GENE-030131-1566"/>
<dbReference type="CTD" id="375611"/>
<dbReference type="ZFIN" id="ZDB-GENE-030131-1566">
    <property type="gene designation" value="slc26a5"/>
</dbReference>
<dbReference type="eggNOG" id="KOG0236">
    <property type="taxonomic scope" value="Eukaryota"/>
</dbReference>
<dbReference type="HOGENOM" id="CLU_003182_9_4_1"/>
<dbReference type="OMA" id="YKDAQRV"/>
<dbReference type="OrthoDB" id="288203at2759"/>
<dbReference type="TreeFam" id="TF313784"/>
<dbReference type="PRO" id="PR:Q7T2C4"/>
<dbReference type="Proteomes" id="UP000000437">
    <property type="component" value="Chromosome 4"/>
</dbReference>
<dbReference type="Bgee" id="ENSDARG00000022424">
    <property type="expression patterns" value="Expressed in mature ovarian follicle and 24 other cell types or tissues"/>
</dbReference>
<dbReference type="ExpressionAtlas" id="Q7T2C4">
    <property type="expression patterns" value="baseline"/>
</dbReference>
<dbReference type="GO" id="GO:0005737">
    <property type="term" value="C:cytoplasm"/>
    <property type="evidence" value="ECO:0000314"/>
    <property type="project" value="ZFIN"/>
</dbReference>
<dbReference type="GO" id="GO:0016020">
    <property type="term" value="C:membrane"/>
    <property type="evidence" value="ECO:0000250"/>
    <property type="project" value="ZFIN"/>
</dbReference>
<dbReference type="GO" id="GO:0005886">
    <property type="term" value="C:plasma membrane"/>
    <property type="evidence" value="ECO:0000314"/>
    <property type="project" value="ZFIN"/>
</dbReference>
<dbReference type="GO" id="GO:0015106">
    <property type="term" value="F:bicarbonate transmembrane transporter activity"/>
    <property type="evidence" value="ECO:0000318"/>
    <property type="project" value="GO_Central"/>
</dbReference>
<dbReference type="GO" id="GO:0015108">
    <property type="term" value="F:chloride transmembrane transporter activity"/>
    <property type="evidence" value="ECO:0000318"/>
    <property type="project" value="GO_Central"/>
</dbReference>
<dbReference type="GO" id="GO:0015499">
    <property type="term" value="F:formate transmembrane transporter activity"/>
    <property type="evidence" value="ECO:0000314"/>
    <property type="project" value="ZFIN"/>
</dbReference>
<dbReference type="GO" id="GO:0015075">
    <property type="term" value="F:monoatomic ion transmembrane transporter activity"/>
    <property type="evidence" value="ECO:0000314"/>
    <property type="project" value="ZFIN"/>
</dbReference>
<dbReference type="GO" id="GO:0019531">
    <property type="term" value="F:oxalate transmembrane transporter activity"/>
    <property type="evidence" value="ECO:0000314"/>
    <property type="project" value="ZFIN"/>
</dbReference>
<dbReference type="GO" id="GO:0160046">
    <property type="term" value="F:oxalate:chloride antiporter activity"/>
    <property type="evidence" value="ECO:0000314"/>
    <property type="project" value="UniProtKB"/>
</dbReference>
<dbReference type="GO" id="GO:0008271">
    <property type="term" value="F:secondary active sulfate transmembrane transporter activity"/>
    <property type="evidence" value="ECO:0000314"/>
    <property type="project" value="ZFIN"/>
</dbReference>
<dbReference type="GO" id="GO:0015116">
    <property type="term" value="F:sulfate transmembrane transporter activity"/>
    <property type="evidence" value="ECO:0000318"/>
    <property type="project" value="GO_Central"/>
</dbReference>
<dbReference type="GO" id="GO:0160044">
    <property type="term" value="F:sulfate:chloride antiporter activity"/>
    <property type="evidence" value="ECO:0000314"/>
    <property type="project" value="UniProtKB"/>
</dbReference>
<dbReference type="GO" id="GO:1902476">
    <property type="term" value="P:chloride transmembrane transport"/>
    <property type="evidence" value="ECO:0000318"/>
    <property type="project" value="GO_Central"/>
</dbReference>
<dbReference type="GO" id="GO:0006821">
    <property type="term" value="P:chloride transport"/>
    <property type="evidence" value="ECO:0000314"/>
    <property type="project" value="ZFIN"/>
</dbReference>
<dbReference type="GO" id="GO:0019532">
    <property type="term" value="P:oxalate transport"/>
    <property type="evidence" value="ECO:0000314"/>
    <property type="project" value="ZFIN"/>
</dbReference>
<dbReference type="GO" id="GO:0042391">
    <property type="term" value="P:regulation of membrane potential"/>
    <property type="evidence" value="ECO:0000314"/>
    <property type="project" value="ZFIN"/>
</dbReference>
<dbReference type="GO" id="GO:1902358">
    <property type="term" value="P:sulfate transmembrane transport"/>
    <property type="evidence" value="ECO:0000314"/>
    <property type="project" value="ZFIN"/>
</dbReference>
<dbReference type="CDD" id="cd07042">
    <property type="entry name" value="STAS_SulP_like_sulfate_transporter"/>
    <property type="match status" value="1"/>
</dbReference>
<dbReference type="Gene3D" id="3.30.750.24">
    <property type="entry name" value="STAS domain"/>
    <property type="match status" value="1"/>
</dbReference>
<dbReference type="InterPro" id="IPR018045">
    <property type="entry name" value="S04_transporter_CS"/>
</dbReference>
<dbReference type="InterPro" id="IPR011547">
    <property type="entry name" value="SLC26A/SulP_dom"/>
</dbReference>
<dbReference type="InterPro" id="IPR001902">
    <property type="entry name" value="SLC26A/SulP_fam"/>
</dbReference>
<dbReference type="InterPro" id="IPR002645">
    <property type="entry name" value="STAS_dom"/>
</dbReference>
<dbReference type="InterPro" id="IPR036513">
    <property type="entry name" value="STAS_dom_sf"/>
</dbReference>
<dbReference type="NCBIfam" id="TIGR00815">
    <property type="entry name" value="sulP"/>
    <property type="match status" value="1"/>
</dbReference>
<dbReference type="PANTHER" id="PTHR11814">
    <property type="entry name" value="SULFATE TRANSPORTER"/>
    <property type="match status" value="1"/>
</dbReference>
<dbReference type="Pfam" id="PF01740">
    <property type="entry name" value="STAS"/>
    <property type="match status" value="1"/>
</dbReference>
<dbReference type="Pfam" id="PF00916">
    <property type="entry name" value="Sulfate_transp"/>
    <property type="match status" value="1"/>
</dbReference>
<dbReference type="SUPFAM" id="SSF52091">
    <property type="entry name" value="SpoIIaa-like"/>
    <property type="match status" value="1"/>
</dbReference>
<dbReference type="PROSITE" id="PS01130">
    <property type="entry name" value="SLC26A"/>
    <property type="match status" value="1"/>
</dbReference>
<dbReference type="PROSITE" id="PS50801">
    <property type="entry name" value="STAS"/>
    <property type="match status" value="1"/>
</dbReference>
<reference key="1">
    <citation type="journal article" date="2013" name="Nature">
        <title>The zebrafish reference genome sequence and its relationship to the human genome.</title>
        <authorList>
            <person name="Howe K."/>
            <person name="Clark M.D."/>
            <person name="Torroja C.F."/>
            <person name="Torrance J."/>
            <person name="Berthelot C."/>
            <person name="Muffato M."/>
            <person name="Collins J.E."/>
            <person name="Humphray S."/>
            <person name="McLaren K."/>
            <person name="Matthews L."/>
            <person name="McLaren S."/>
            <person name="Sealy I."/>
            <person name="Caccamo M."/>
            <person name="Churcher C."/>
            <person name="Scott C."/>
            <person name="Barrett J.C."/>
            <person name="Koch R."/>
            <person name="Rauch G.J."/>
            <person name="White S."/>
            <person name="Chow W."/>
            <person name="Kilian B."/>
            <person name="Quintais L.T."/>
            <person name="Guerra-Assuncao J.A."/>
            <person name="Zhou Y."/>
            <person name="Gu Y."/>
            <person name="Yen J."/>
            <person name="Vogel J.H."/>
            <person name="Eyre T."/>
            <person name="Redmond S."/>
            <person name="Banerjee R."/>
            <person name="Chi J."/>
            <person name="Fu B."/>
            <person name="Langley E."/>
            <person name="Maguire S.F."/>
            <person name="Laird G.K."/>
            <person name="Lloyd D."/>
            <person name="Kenyon E."/>
            <person name="Donaldson S."/>
            <person name="Sehra H."/>
            <person name="Almeida-King J."/>
            <person name="Loveland J."/>
            <person name="Trevanion S."/>
            <person name="Jones M."/>
            <person name="Quail M."/>
            <person name="Willey D."/>
            <person name="Hunt A."/>
            <person name="Burton J."/>
            <person name="Sims S."/>
            <person name="McLay K."/>
            <person name="Plumb B."/>
            <person name="Davis J."/>
            <person name="Clee C."/>
            <person name="Oliver K."/>
            <person name="Clark R."/>
            <person name="Riddle C."/>
            <person name="Elliot D."/>
            <person name="Threadgold G."/>
            <person name="Harden G."/>
            <person name="Ware D."/>
            <person name="Begum S."/>
            <person name="Mortimore B."/>
            <person name="Kerry G."/>
            <person name="Heath P."/>
            <person name="Phillimore B."/>
            <person name="Tracey A."/>
            <person name="Corby N."/>
            <person name="Dunn M."/>
            <person name="Johnson C."/>
            <person name="Wood J."/>
            <person name="Clark S."/>
            <person name="Pelan S."/>
            <person name="Griffiths G."/>
            <person name="Smith M."/>
            <person name="Glithero R."/>
            <person name="Howden P."/>
            <person name="Barker N."/>
            <person name="Lloyd C."/>
            <person name="Stevens C."/>
            <person name="Harley J."/>
            <person name="Holt K."/>
            <person name="Panagiotidis G."/>
            <person name="Lovell J."/>
            <person name="Beasley H."/>
            <person name="Henderson C."/>
            <person name="Gordon D."/>
            <person name="Auger K."/>
            <person name="Wright D."/>
            <person name="Collins J."/>
            <person name="Raisen C."/>
            <person name="Dyer L."/>
            <person name="Leung K."/>
            <person name="Robertson L."/>
            <person name="Ambridge K."/>
            <person name="Leongamornlert D."/>
            <person name="McGuire S."/>
            <person name="Gilderthorp R."/>
            <person name="Griffiths C."/>
            <person name="Manthravadi D."/>
            <person name="Nichol S."/>
            <person name="Barker G."/>
            <person name="Whitehead S."/>
            <person name="Kay M."/>
            <person name="Brown J."/>
            <person name="Murnane C."/>
            <person name="Gray E."/>
            <person name="Humphries M."/>
            <person name="Sycamore N."/>
            <person name="Barker D."/>
            <person name="Saunders D."/>
            <person name="Wallis J."/>
            <person name="Babbage A."/>
            <person name="Hammond S."/>
            <person name="Mashreghi-Mohammadi M."/>
            <person name="Barr L."/>
            <person name="Martin S."/>
            <person name="Wray P."/>
            <person name="Ellington A."/>
            <person name="Matthews N."/>
            <person name="Ellwood M."/>
            <person name="Woodmansey R."/>
            <person name="Clark G."/>
            <person name="Cooper J."/>
            <person name="Tromans A."/>
            <person name="Grafham D."/>
            <person name="Skuce C."/>
            <person name="Pandian R."/>
            <person name="Andrews R."/>
            <person name="Harrison E."/>
            <person name="Kimberley A."/>
            <person name="Garnett J."/>
            <person name="Fosker N."/>
            <person name="Hall R."/>
            <person name="Garner P."/>
            <person name="Kelly D."/>
            <person name="Bird C."/>
            <person name="Palmer S."/>
            <person name="Gehring I."/>
            <person name="Berger A."/>
            <person name="Dooley C.M."/>
            <person name="Ersan-Urun Z."/>
            <person name="Eser C."/>
            <person name="Geiger H."/>
            <person name="Geisler M."/>
            <person name="Karotki L."/>
            <person name="Kirn A."/>
            <person name="Konantz J."/>
            <person name="Konantz M."/>
            <person name="Oberlander M."/>
            <person name="Rudolph-Geiger S."/>
            <person name="Teucke M."/>
            <person name="Lanz C."/>
            <person name="Raddatz G."/>
            <person name="Osoegawa K."/>
            <person name="Zhu B."/>
            <person name="Rapp A."/>
            <person name="Widaa S."/>
            <person name="Langford C."/>
            <person name="Yang F."/>
            <person name="Schuster S.C."/>
            <person name="Carter N.P."/>
            <person name="Harrow J."/>
            <person name="Ning Z."/>
            <person name="Herrero J."/>
            <person name="Searle S.M."/>
            <person name="Enright A."/>
            <person name="Geisler R."/>
            <person name="Plasterk R.H."/>
            <person name="Lee C."/>
            <person name="Westerfield M."/>
            <person name="de Jong P.J."/>
            <person name="Zon L.I."/>
            <person name="Postlethwait J.H."/>
            <person name="Nusslein-Volhard C."/>
            <person name="Hubbard T.J."/>
            <person name="Roest Crollius H."/>
            <person name="Rogers J."/>
            <person name="Stemple D.L."/>
        </authorList>
    </citation>
    <scope>NUCLEOTIDE SEQUENCE [LARGE SCALE GENOMIC DNA]</scope>
    <source>
        <strain>Tuebingen</strain>
    </source>
</reference>
<reference key="2">
    <citation type="submission" date="2003-07" db="EMBL/GenBank/DDBJ databases">
        <authorList>
            <consortium name="NIH - Zebrafish Gene Collection (ZGC) project"/>
        </authorList>
    </citation>
    <scope>NUCLEOTIDE SEQUENCE [LARGE SCALE MRNA]</scope>
    <source>
        <tissue>Kidney</tissue>
    </source>
</reference>
<reference key="3">
    <citation type="journal article" date="2007" name="J. Physiol. (Lond.)">
        <title>Voltage-sensitive prestin orthologue expressed in zebrafish hair cells.</title>
        <authorList>
            <person name="Albert J.T."/>
            <person name="Winter H."/>
            <person name="Schaechinger T.J."/>
            <person name="Weber T."/>
            <person name="Wang X."/>
            <person name="He D.Z."/>
            <person name="Hendrich O."/>
            <person name="Geisler H.S."/>
            <person name="Zimmermann U."/>
            <person name="Oelmann K."/>
            <person name="Knipper M."/>
            <person name="Gopfert M.C."/>
            <person name="Oliver D."/>
        </authorList>
    </citation>
    <scope>FUNCTION</scope>
    <scope>SUBCELLULAR LOCATION</scope>
    <scope>TISSUE SPECIFICITY</scope>
</reference>
<reference key="4">
    <citation type="journal article" date="2007" name="Proc. Natl. Acad. Sci. U.S.A.">
        <title>Nonmammalian orthologs of prestin (SLC26A5) are electrogenic divalent/chloride anion exchangers.</title>
        <authorList>
            <person name="Schaechinger T.J."/>
            <person name="Oliver D."/>
        </authorList>
    </citation>
    <scope>FUNCTION</scope>
    <scope>TRANSPORTER ACTIVITY</scope>
    <scope>SUBCELLULAR LOCATION</scope>
</reference>
<reference key="5">
    <citation type="journal article" date="2012" name="J. Cell Sci.">
        <title>A motif of eleven amino acids is a structural adaptation that facilitates motor capability of eutherian prestin.</title>
        <authorList>
            <person name="Tan X."/>
            <person name="Pecka J.L."/>
            <person name="Tang J."/>
            <person name="Lovas S."/>
            <person name="Beisel K.W."/>
            <person name="He D.Z."/>
        </authorList>
    </citation>
    <scope>FUNCTION</scope>
</reference>
<accession>Q7T2C4</accession>
<accession>A0A8M1PEF9</accession>
<protein>
    <recommendedName>
        <fullName evidence="11">Prestin</fullName>
    </recommendedName>
    <alternativeName>
        <fullName>Solute carrier family 26 member 5</fullName>
    </alternativeName>
</protein>
<feature type="chain" id="PRO_0000458479" description="Prestin">
    <location>
        <begin position="1"/>
        <end position="739"/>
    </location>
</feature>
<feature type="topological domain" description="Cytoplasmic" evidence="12">
    <location>
        <begin position="1"/>
        <end position="76"/>
    </location>
</feature>
<feature type="transmembrane region" description="Helical; Name=1" evidence="3">
    <location>
        <begin position="77"/>
        <end position="106"/>
    </location>
</feature>
<feature type="topological domain" description="Extracellular" evidence="12">
    <location>
        <begin position="107"/>
        <end position="109"/>
    </location>
</feature>
<feature type="transmembrane region" description="Helical; Name=2" evidence="3">
    <location>
        <begin position="110"/>
        <end position="127"/>
    </location>
</feature>
<feature type="topological domain" description="Cytoplasmic" evidence="12">
    <location>
        <begin position="128"/>
        <end position="138"/>
    </location>
</feature>
<feature type="transmembrane region" description="Helical; Name=3" evidence="3">
    <location>
        <begin position="139"/>
        <end position="152"/>
    </location>
</feature>
<feature type="topological domain" description="Extracellular" evidence="12">
    <location>
        <begin position="153"/>
        <end position="169"/>
    </location>
</feature>
<feature type="transmembrane region" description="Helical; Name=4" evidence="3">
    <location>
        <begin position="170"/>
        <end position="199"/>
    </location>
</feature>
<feature type="topological domain" description="Cytoplasmic" evidence="12">
    <location>
        <begin position="200"/>
        <end position="209"/>
    </location>
</feature>
<feature type="transmembrane region" description="Helical; Name=5a" evidence="3">
    <location>
        <begin position="210"/>
        <end position="233"/>
    </location>
</feature>
<feature type="topological domain" description="Extracellular" evidence="12">
    <location>
        <begin position="234"/>
        <end position="244"/>
    </location>
</feature>
<feature type="intramembrane region" description="Helical; Name=5b" evidence="3">
    <location>
        <begin position="245"/>
        <end position="256"/>
    </location>
</feature>
<feature type="topological domain" description="Extracellular" evidence="12">
    <location>
        <begin position="257"/>
        <end position="261"/>
    </location>
</feature>
<feature type="transmembrane region" description="Helical; Name=6" evidence="3">
    <location>
        <begin position="262"/>
        <end position="285"/>
    </location>
</feature>
<feature type="topological domain" description="Cytoplasmic" evidence="12">
    <location>
        <begin position="286"/>
        <end position="294"/>
    </location>
</feature>
<feature type="transmembrane region" description="Helical; Name=7" evidence="3">
    <location>
        <begin position="295"/>
        <end position="310"/>
    </location>
</feature>
<feature type="topological domain" description="Extracellular" evidence="12">
    <location>
        <begin position="311"/>
        <end position="335"/>
    </location>
</feature>
<feature type="transmembrane region" description="Helical; Name=8" evidence="3">
    <location>
        <begin position="336"/>
        <end position="370"/>
    </location>
</feature>
<feature type="topological domain" description="Cytoplasmic" evidence="12">
    <location>
        <begin position="371"/>
        <end position="373"/>
    </location>
</feature>
<feature type="transmembrane region" description="Helical; Name=9" evidence="3">
    <location>
        <begin position="374"/>
        <end position="391"/>
    </location>
</feature>
<feature type="topological domain" description="Extracellular" evidence="12">
    <location>
        <begin position="392"/>
        <end position="399"/>
    </location>
</feature>
<feature type="transmembrane region" description="Helical; Name=10" evidence="3">
    <location>
        <begin position="400"/>
        <end position="409"/>
    </location>
</feature>
<feature type="topological domain" description="Cytoplasmic" evidence="12">
    <location>
        <begin position="410"/>
        <end position="413"/>
    </location>
</feature>
<feature type="transmembrane region" description="Helical; Name=11" evidence="3">
    <location>
        <begin position="414"/>
        <end position="435"/>
    </location>
</feature>
<feature type="topological domain" description="Extracellular" evidence="12">
    <location>
        <begin position="436"/>
        <end position="439"/>
    </location>
</feature>
<feature type="transmembrane region" description="Helical; Name=12" evidence="3">
    <location>
        <begin position="440"/>
        <end position="467"/>
    </location>
</feature>
<feature type="topological domain" description="Cytoplasmic" evidence="12">
    <location>
        <position position="468"/>
    </location>
</feature>
<feature type="transmembrane region" description="Helical; Name=13" evidence="3">
    <location>
        <begin position="469"/>
        <end position="484"/>
    </location>
</feature>
<feature type="topological domain" description="Extracellular" evidence="12">
    <location>
        <begin position="485"/>
        <end position="486"/>
    </location>
</feature>
<feature type="transmembrane region" description="Helical; Name=14" evidence="3">
    <location>
        <begin position="487"/>
        <end position="507"/>
    </location>
</feature>
<feature type="topological domain" description="Cytoplasmic" evidence="12">
    <location>
        <begin position="508"/>
        <end position="739"/>
    </location>
</feature>
<feature type="domain" description="STAS" evidence="6">
    <location>
        <begin position="528"/>
        <end position="726"/>
    </location>
</feature>
<feature type="region of interest" description="Extended region for STAS domain" evidence="4">
    <location>
        <begin position="508"/>
        <end position="731"/>
    </location>
</feature>
<feature type="binding site" evidence="3">
    <location>
        <position position="401"/>
    </location>
    <ligand>
        <name>salicylate</name>
        <dbReference type="ChEBI" id="CHEBI:30762"/>
        <note>antagonist</note>
    </ligand>
</feature>
<feature type="site" description="Controls the anion transport" evidence="1">
    <location>
        <position position="401"/>
    </location>
</feature>
<feature type="glycosylation site" description="N-linked (GlcNAc...) asparagine" evidence="7">
    <location>
        <position position="161"/>
    </location>
</feature>
<feature type="glycosylation site" description="N-linked (GlcNAc...) asparagine" evidence="7">
    <location>
        <position position="164"/>
    </location>
</feature>
<evidence type="ECO:0000250" key="1">
    <source>
        <dbReference type="UniProtKB" id="A0FKN5"/>
    </source>
</evidence>
<evidence type="ECO:0000250" key="2">
    <source>
        <dbReference type="UniProtKB" id="D7PC76"/>
    </source>
</evidence>
<evidence type="ECO:0000250" key="3">
    <source>
        <dbReference type="UniProtKB" id="P58743"/>
    </source>
</evidence>
<evidence type="ECO:0000250" key="4">
    <source>
        <dbReference type="UniProtKB" id="Q9EPH0"/>
    </source>
</evidence>
<evidence type="ECO:0000255" key="5"/>
<evidence type="ECO:0000255" key="6">
    <source>
        <dbReference type="PROSITE-ProRule" id="PRU00198"/>
    </source>
</evidence>
<evidence type="ECO:0000255" key="7">
    <source>
        <dbReference type="PROSITE-ProRule" id="PRU00498"/>
    </source>
</evidence>
<evidence type="ECO:0000269" key="8">
    <source>
    </source>
</evidence>
<evidence type="ECO:0000269" key="9">
    <source>
    </source>
</evidence>
<evidence type="ECO:0000269" key="10">
    <source>
    </source>
</evidence>
<evidence type="ECO:0000303" key="11">
    <source>
    </source>
</evidence>
<evidence type="ECO:0000305" key="12"/>
<evidence type="ECO:0000312" key="13">
    <source>
        <dbReference type="ZFIN" id="ZDB-GENE-030131-1566"/>
    </source>
</evidence>
<proteinExistence type="evidence at transcript level"/>
<gene>
    <name evidence="13" type="primary">slc26a5</name>
</gene>
<name>S26A5_DANRE</name>
<sequence length="739" mass="81405">MEHVTVSEEPSATLMYHVERPIFSEAYIDSELLHKRKKTPKPYKLRVAEHLCCSSEKVKSVVFGFLPILTWLPSYPLKEYLFGDIVSGISTGVMQLPQGLAYAMLAAVPPVFGLYSSFYPVLLYTFFGTSKHISIGTFAVISLMIGGVAVREAPDSMFMVNGTNSSLVVNIEARDSRRVEVVVALTTLVGIIQFVLGLLRFGFLAIYLTEPLVRGFTTAAAVHVSVSQLKYLLGVKTARFNGPLSVVYSLDAVLRNIADTNIVTLIIGLGCTVFLYIIKQLNERFKKKLLIPIPGEIIVVIVSTGISYGMLMSENYGVDVVGKIPTGLLPPKVPDFSVFPNLFADAVPIAVVGFSITISLAKTFALKYGYSVDGNQELIALGLCNFVSSFFHTFVVTASMSRSLVQESTGGHTEIAGLLASLLVLLVVVAIGFVFQPLPTTVLAAIIMVNLLGMFKQTRDIPVLWRKSKIELAIWLVSFFASVLLGLDYGLAVAMAFAILTVIYRTQRPKNVVLGQIPDTGLYFDVDEYEEAEECSGIKIFQSNSSIYFANSELYVKALKAKTGIDPEKLLDAKKLQLKYAKRDTEGTKTVNQGSLLKKNAVVLLDMELGVTHEVLNGPQKPKHVHTNGQMTEKHIESESEDEFFLQRLTPIHSVILDFTPVNFIDSVGAKTIKSVIKEYATVDVKVVLAGCSRTLLSELRTLQFFSEPVTPDLIFPTIHDAVLQCKRWRDLPVHPNIH</sequence>
<organism>
    <name type="scientific">Danio rerio</name>
    <name type="common">Zebrafish</name>
    <name type="synonym">Brachydanio rerio</name>
    <dbReference type="NCBI Taxonomy" id="7955"/>
    <lineage>
        <taxon>Eukaryota</taxon>
        <taxon>Metazoa</taxon>
        <taxon>Chordata</taxon>
        <taxon>Craniata</taxon>
        <taxon>Vertebrata</taxon>
        <taxon>Euteleostomi</taxon>
        <taxon>Actinopterygii</taxon>
        <taxon>Neopterygii</taxon>
        <taxon>Teleostei</taxon>
        <taxon>Ostariophysi</taxon>
        <taxon>Cypriniformes</taxon>
        <taxon>Danionidae</taxon>
        <taxon>Danioninae</taxon>
        <taxon>Danio</taxon>
    </lineage>
</organism>